<evidence type="ECO:0000255" key="1">
    <source>
        <dbReference type="HAMAP-Rule" id="MF_01864"/>
    </source>
</evidence>
<evidence type="ECO:0000255" key="2">
    <source>
        <dbReference type="PROSITE-ProRule" id="PRU01266"/>
    </source>
</evidence>
<proteinExistence type="inferred from homology"/>
<gene>
    <name evidence="1" type="primary">miaB</name>
    <name type="ordered locus">CJA_1640</name>
</gene>
<name>MIAB_CELJU</name>
<organism>
    <name type="scientific">Cellvibrio japonicus (strain Ueda107)</name>
    <name type="common">Pseudomonas fluorescens subsp. cellulosa</name>
    <dbReference type="NCBI Taxonomy" id="498211"/>
    <lineage>
        <taxon>Bacteria</taxon>
        <taxon>Pseudomonadati</taxon>
        <taxon>Pseudomonadota</taxon>
        <taxon>Gammaproteobacteria</taxon>
        <taxon>Cellvibrionales</taxon>
        <taxon>Cellvibrionaceae</taxon>
        <taxon>Cellvibrio</taxon>
    </lineage>
</organism>
<protein>
    <recommendedName>
        <fullName evidence="1">tRNA-2-methylthio-N(6)-dimethylallyladenosine synthase</fullName>
        <ecNumber evidence="1">2.8.4.3</ecNumber>
    </recommendedName>
    <alternativeName>
        <fullName evidence="1">(Dimethylallyl)adenosine tRNA methylthiotransferase MiaB</fullName>
    </alternativeName>
    <alternativeName>
        <fullName evidence="1">tRNA-i(6)A37 methylthiotransferase</fullName>
    </alternativeName>
</protein>
<dbReference type="EC" id="2.8.4.3" evidence="1"/>
<dbReference type="EMBL" id="CP000934">
    <property type="protein sequence ID" value="ACE85426.1"/>
    <property type="molecule type" value="Genomic_DNA"/>
</dbReference>
<dbReference type="RefSeq" id="WP_012487264.1">
    <property type="nucleotide sequence ID" value="NC_010995.1"/>
</dbReference>
<dbReference type="SMR" id="B3PER6"/>
<dbReference type="STRING" id="498211.CJA_1640"/>
<dbReference type="KEGG" id="cja:CJA_1640"/>
<dbReference type="eggNOG" id="COG0621">
    <property type="taxonomic scope" value="Bacteria"/>
</dbReference>
<dbReference type="HOGENOM" id="CLU_018697_2_0_6"/>
<dbReference type="OrthoDB" id="9805215at2"/>
<dbReference type="Proteomes" id="UP000001036">
    <property type="component" value="Chromosome"/>
</dbReference>
<dbReference type="GO" id="GO:0005829">
    <property type="term" value="C:cytosol"/>
    <property type="evidence" value="ECO:0007669"/>
    <property type="project" value="TreeGrafter"/>
</dbReference>
<dbReference type="GO" id="GO:0051539">
    <property type="term" value="F:4 iron, 4 sulfur cluster binding"/>
    <property type="evidence" value="ECO:0007669"/>
    <property type="project" value="UniProtKB-UniRule"/>
</dbReference>
<dbReference type="GO" id="GO:0046872">
    <property type="term" value="F:metal ion binding"/>
    <property type="evidence" value="ECO:0007669"/>
    <property type="project" value="UniProtKB-KW"/>
</dbReference>
<dbReference type="GO" id="GO:0035597">
    <property type="term" value="F:N6-isopentenyladenosine methylthiotransferase activity"/>
    <property type="evidence" value="ECO:0007669"/>
    <property type="project" value="TreeGrafter"/>
</dbReference>
<dbReference type="CDD" id="cd01335">
    <property type="entry name" value="Radical_SAM"/>
    <property type="match status" value="1"/>
</dbReference>
<dbReference type="FunFam" id="3.40.50.12160:FF:000001">
    <property type="entry name" value="tRNA-2-methylthio-N(6)-dimethylallyladenosine synthase"/>
    <property type="match status" value="1"/>
</dbReference>
<dbReference type="FunFam" id="3.80.30.20:FF:000001">
    <property type="entry name" value="tRNA-2-methylthio-N(6)-dimethylallyladenosine synthase 2"/>
    <property type="match status" value="1"/>
</dbReference>
<dbReference type="Gene3D" id="3.40.50.12160">
    <property type="entry name" value="Methylthiotransferase, N-terminal domain"/>
    <property type="match status" value="1"/>
</dbReference>
<dbReference type="Gene3D" id="3.80.30.20">
    <property type="entry name" value="tm_1862 like domain"/>
    <property type="match status" value="1"/>
</dbReference>
<dbReference type="HAMAP" id="MF_01864">
    <property type="entry name" value="tRNA_metthiotr_MiaB"/>
    <property type="match status" value="1"/>
</dbReference>
<dbReference type="InterPro" id="IPR006638">
    <property type="entry name" value="Elp3/MiaA/NifB-like_rSAM"/>
</dbReference>
<dbReference type="InterPro" id="IPR005839">
    <property type="entry name" value="Methylthiotransferase"/>
</dbReference>
<dbReference type="InterPro" id="IPR020612">
    <property type="entry name" value="Methylthiotransferase_CS"/>
</dbReference>
<dbReference type="InterPro" id="IPR013848">
    <property type="entry name" value="Methylthiotransferase_N"/>
</dbReference>
<dbReference type="InterPro" id="IPR038135">
    <property type="entry name" value="Methylthiotransferase_N_sf"/>
</dbReference>
<dbReference type="InterPro" id="IPR006463">
    <property type="entry name" value="MiaB_methiolase"/>
</dbReference>
<dbReference type="InterPro" id="IPR007197">
    <property type="entry name" value="rSAM"/>
</dbReference>
<dbReference type="InterPro" id="IPR023404">
    <property type="entry name" value="rSAM_horseshoe"/>
</dbReference>
<dbReference type="InterPro" id="IPR002792">
    <property type="entry name" value="TRAM_dom"/>
</dbReference>
<dbReference type="NCBIfam" id="TIGR01574">
    <property type="entry name" value="miaB-methiolase"/>
    <property type="match status" value="1"/>
</dbReference>
<dbReference type="NCBIfam" id="TIGR00089">
    <property type="entry name" value="MiaB/RimO family radical SAM methylthiotransferase"/>
    <property type="match status" value="1"/>
</dbReference>
<dbReference type="PANTHER" id="PTHR43020">
    <property type="entry name" value="CDK5 REGULATORY SUBUNIT-ASSOCIATED PROTEIN 1"/>
    <property type="match status" value="1"/>
</dbReference>
<dbReference type="PANTHER" id="PTHR43020:SF2">
    <property type="entry name" value="MITOCHONDRIAL TRNA METHYLTHIOTRANSFERASE CDK5RAP1"/>
    <property type="match status" value="1"/>
</dbReference>
<dbReference type="Pfam" id="PF04055">
    <property type="entry name" value="Radical_SAM"/>
    <property type="match status" value="1"/>
</dbReference>
<dbReference type="Pfam" id="PF01938">
    <property type="entry name" value="TRAM"/>
    <property type="match status" value="1"/>
</dbReference>
<dbReference type="Pfam" id="PF00919">
    <property type="entry name" value="UPF0004"/>
    <property type="match status" value="1"/>
</dbReference>
<dbReference type="SFLD" id="SFLDF00273">
    <property type="entry name" value="(dimethylallyl)adenosine_tRNA"/>
    <property type="match status" value="1"/>
</dbReference>
<dbReference type="SFLD" id="SFLDG01082">
    <property type="entry name" value="B12-binding_domain_containing"/>
    <property type="match status" value="1"/>
</dbReference>
<dbReference type="SFLD" id="SFLDG01061">
    <property type="entry name" value="methylthiotransferase"/>
    <property type="match status" value="1"/>
</dbReference>
<dbReference type="SMART" id="SM00729">
    <property type="entry name" value="Elp3"/>
    <property type="match status" value="1"/>
</dbReference>
<dbReference type="SUPFAM" id="SSF102114">
    <property type="entry name" value="Radical SAM enzymes"/>
    <property type="match status" value="1"/>
</dbReference>
<dbReference type="PROSITE" id="PS51449">
    <property type="entry name" value="MTTASE_N"/>
    <property type="match status" value="1"/>
</dbReference>
<dbReference type="PROSITE" id="PS01278">
    <property type="entry name" value="MTTASE_RADICAL"/>
    <property type="match status" value="1"/>
</dbReference>
<dbReference type="PROSITE" id="PS51918">
    <property type="entry name" value="RADICAL_SAM"/>
    <property type="match status" value="1"/>
</dbReference>
<dbReference type="PROSITE" id="PS50926">
    <property type="entry name" value="TRAM"/>
    <property type="match status" value="1"/>
</dbReference>
<keyword id="KW-0004">4Fe-4S</keyword>
<keyword id="KW-0963">Cytoplasm</keyword>
<keyword id="KW-0408">Iron</keyword>
<keyword id="KW-0411">Iron-sulfur</keyword>
<keyword id="KW-0479">Metal-binding</keyword>
<keyword id="KW-1185">Reference proteome</keyword>
<keyword id="KW-0949">S-adenosyl-L-methionine</keyword>
<keyword id="KW-0808">Transferase</keyword>
<keyword id="KW-0819">tRNA processing</keyword>
<feature type="chain" id="PRO_0000374205" description="tRNA-2-methylthio-N(6)-dimethylallyladenosine synthase">
    <location>
        <begin position="1"/>
        <end position="456"/>
    </location>
</feature>
<feature type="domain" description="MTTase N-terminal" evidence="1">
    <location>
        <begin position="9"/>
        <end position="126"/>
    </location>
</feature>
<feature type="domain" description="Radical SAM core" evidence="2">
    <location>
        <begin position="149"/>
        <end position="381"/>
    </location>
</feature>
<feature type="domain" description="TRAM" evidence="1">
    <location>
        <begin position="384"/>
        <end position="448"/>
    </location>
</feature>
<feature type="binding site" evidence="1">
    <location>
        <position position="18"/>
    </location>
    <ligand>
        <name>[4Fe-4S] cluster</name>
        <dbReference type="ChEBI" id="CHEBI:49883"/>
        <label>1</label>
    </ligand>
</feature>
<feature type="binding site" evidence="1">
    <location>
        <position position="55"/>
    </location>
    <ligand>
        <name>[4Fe-4S] cluster</name>
        <dbReference type="ChEBI" id="CHEBI:49883"/>
        <label>1</label>
    </ligand>
</feature>
<feature type="binding site" evidence="1">
    <location>
        <position position="89"/>
    </location>
    <ligand>
        <name>[4Fe-4S] cluster</name>
        <dbReference type="ChEBI" id="CHEBI:49883"/>
        <label>1</label>
    </ligand>
</feature>
<feature type="binding site" evidence="1">
    <location>
        <position position="163"/>
    </location>
    <ligand>
        <name>[4Fe-4S] cluster</name>
        <dbReference type="ChEBI" id="CHEBI:49883"/>
        <label>2</label>
        <note>4Fe-4S-S-AdoMet</note>
    </ligand>
</feature>
<feature type="binding site" evidence="1">
    <location>
        <position position="167"/>
    </location>
    <ligand>
        <name>[4Fe-4S] cluster</name>
        <dbReference type="ChEBI" id="CHEBI:49883"/>
        <label>2</label>
        <note>4Fe-4S-S-AdoMet</note>
    </ligand>
</feature>
<feature type="binding site" evidence="1">
    <location>
        <position position="170"/>
    </location>
    <ligand>
        <name>[4Fe-4S] cluster</name>
        <dbReference type="ChEBI" id="CHEBI:49883"/>
        <label>2</label>
        <note>4Fe-4S-S-AdoMet</note>
    </ligand>
</feature>
<sequence>MSATQTPTKKLYIKTHGCQMNEYDSNRMRDLLGESHNMVATENPEEADVILINTCSIREKAQEKLFHELGRWKNLKKQNPELIIGVGGCVASQEGAAIAERAPYVDLIFGPQTLHRLPEMMETKKSNGVVVVDISFPEIEKFDKLPQPDADGVSAFVSIMEGCSKYCTFCVVPYTRGEEVSRPVADVMAEVIHLAKQGVREVNLLGQNVNAYRGAAADGTIVDLAELITYIAAVDGIDRIRFTTSHPVEFTDALIEVYNQVPELVSHLHLPVQSGSDRILMAMKRGHTVLEYKSKLRRIKKNRPNISFSSDFIIGFPGETDADFEATMKLIHDMEFDTSFSFIYSPRPGTPAADLPDDTPEEVKKQRLAILQDRITQQAMAISRRMVGNTERILVSGYSKKDPGQLSGRTENNRVVNFRCDNPALIGKFADVLIEEALPNSLRGSLIASELDQDWH</sequence>
<accession>B3PER6</accession>
<comment type="function">
    <text evidence="1">Catalyzes the methylthiolation of N6-(dimethylallyl)adenosine (i(6)A), leading to the formation of 2-methylthio-N6-(dimethylallyl)adenosine (ms(2)i(6)A) at position 37 in tRNAs that read codons beginning with uridine.</text>
</comment>
<comment type="catalytic activity">
    <reaction evidence="1">
        <text>N(6)-dimethylallyladenosine(37) in tRNA + (sulfur carrier)-SH + AH2 + 2 S-adenosyl-L-methionine = 2-methylsulfanyl-N(6)-dimethylallyladenosine(37) in tRNA + (sulfur carrier)-H + 5'-deoxyadenosine + L-methionine + A + S-adenosyl-L-homocysteine + 2 H(+)</text>
        <dbReference type="Rhea" id="RHEA:37067"/>
        <dbReference type="Rhea" id="RHEA-COMP:10375"/>
        <dbReference type="Rhea" id="RHEA-COMP:10376"/>
        <dbReference type="Rhea" id="RHEA-COMP:14737"/>
        <dbReference type="Rhea" id="RHEA-COMP:14739"/>
        <dbReference type="ChEBI" id="CHEBI:13193"/>
        <dbReference type="ChEBI" id="CHEBI:15378"/>
        <dbReference type="ChEBI" id="CHEBI:17319"/>
        <dbReference type="ChEBI" id="CHEBI:17499"/>
        <dbReference type="ChEBI" id="CHEBI:29917"/>
        <dbReference type="ChEBI" id="CHEBI:57844"/>
        <dbReference type="ChEBI" id="CHEBI:57856"/>
        <dbReference type="ChEBI" id="CHEBI:59789"/>
        <dbReference type="ChEBI" id="CHEBI:64428"/>
        <dbReference type="ChEBI" id="CHEBI:74415"/>
        <dbReference type="ChEBI" id="CHEBI:74417"/>
        <dbReference type="EC" id="2.8.4.3"/>
    </reaction>
</comment>
<comment type="cofactor">
    <cofactor evidence="1">
        <name>[4Fe-4S] cluster</name>
        <dbReference type="ChEBI" id="CHEBI:49883"/>
    </cofactor>
    <text evidence="1">Binds 2 [4Fe-4S] clusters. One cluster is coordinated with 3 cysteines and an exchangeable S-adenosyl-L-methionine.</text>
</comment>
<comment type="subunit">
    <text evidence="1">Monomer.</text>
</comment>
<comment type="subcellular location">
    <subcellularLocation>
        <location evidence="1">Cytoplasm</location>
    </subcellularLocation>
</comment>
<comment type="similarity">
    <text evidence="1">Belongs to the methylthiotransferase family. MiaB subfamily.</text>
</comment>
<reference key="1">
    <citation type="journal article" date="2008" name="J. Bacteriol.">
        <title>Insights into plant cell wall degradation from the genome sequence of the soil bacterium Cellvibrio japonicus.</title>
        <authorList>
            <person name="DeBoy R.T."/>
            <person name="Mongodin E.F."/>
            <person name="Fouts D.E."/>
            <person name="Tailford L.E."/>
            <person name="Khouri H."/>
            <person name="Emerson J.B."/>
            <person name="Mohamoud Y."/>
            <person name="Watkins K."/>
            <person name="Henrissat B."/>
            <person name="Gilbert H.J."/>
            <person name="Nelson K.E."/>
        </authorList>
    </citation>
    <scope>NUCLEOTIDE SEQUENCE [LARGE SCALE GENOMIC DNA]</scope>
    <source>
        <strain>Ueda107</strain>
    </source>
</reference>